<organism>
    <name type="scientific">Yersinia enterocolitica serotype O:8 / biotype 1B (strain NCTC 13174 / 8081)</name>
    <dbReference type="NCBI Taxonomy" id="393305"/>
    <lineage>
        <taxon>Bacteria</taxon>
        <taxon>Pseudomonadati</taxon>
        <taxon>Pseudomonadota</taxon>
        <taxon>Gammaproteobacteria</taxon>
        <taxon>Enterobacterales</taxon>
        <taxon>Yersiniaceae</taxon>
        <taxon>Yersinia</taxon>
    </lineage>
</organism>
<reference key="1">
    <citation type="journal article" date="2006" name="PLoS Genet.">
        <title>The complete genome sequence and comparative genome analysis of the high pathogenicity Yersinia enterocolitica strain 8081.</title>
        <authorList>
            <person name="Thomson N.R."/>
            <person name="Howard S."/>
            <person name="Wren B.W."/>
            <person name="Holden M.T.G."/>
            <person name="Crossman L."/>
            <person name="Challis G.L."/>
            <person name="Churcher C."/>
            <person name="Mungall K."/>
            <person name="Brooks K."/>
            <person name="Chillingworth T."/>
            <person name="Feltwell T."/>
            <person name="Abdellah Z."/>
            <person name="Hauser H."/>
            <person name="Jagels K."/>
            <person name="Maddison M."/>
            <person name="Moule S."/>
            <person name="Sanders M."/>
            <person name="Whitehead S."/>
            <person name="Quail M.A."/>
            <person name="Dougan G."/>
            <person name="Parkhill J."/>
            <person name="Prentice M.B."/>
        </authorList>
    </citation>
    <scope>NUCLEOTIDE SEQUENCE [LARGE SCALE GENOMIC DNA]</scope>
    <source>
        <strain>NCTC 13174 / 8081</strain>
    </source>
</reference>
<feature type="chain" id="PRO_0000402707" description="Ureidoacrylate amidohydrolase RutB">
    <location>
        <begin position="1"/>
        <end position="230"/>
    </location>
</feature>
<feature type="active site" description="Proton acceptor" evidence="1">
    <location>
        <position position="23"/>
    </location>
</feature>
<feature type="active site" evidence="1">
    <location>
        <position position="132"/>
    </location>
</feature>
<feature type="active site" description="Nucleophile" evidence="1">
    <location>
        <position position="165"/>
    </location>
</feature>
<protein>
    <recommendedName>
        <fullName evidence="1">Ureidoacrylate amidohydrolase RutB</fullName>
        <ecNumber evidence="1">3.5.1.110</ecNumber>
    </recommendedName>
</protein>
<evidence type="ECO:0000255" key="1">
    <source>
        <dbReference type="HAMAP-Rule" id="MF_00830"/>
    </source>
</evidence>
<comment type="function">
    <text evidence="1">Hydrolyzes ureidoacrylate to form aminoacrylate and carbamate. The carbamate hydrolyzes spontaneously, thereby releasing one of the nitrogen atoms of the pyrimidine ring as ammonia and one of its carbon atoms as CO2.</text>
</comment>
<comment type="catalytic activity">
    <reaction evidence="1">
        <text>(Z)-3-ureidoacrylate + H2O + H(+) = (Z)-3-aminoacrylate + NH4(+) + CO2</text>
        <dbReference type="Rhea" id="RHEA:42624"/>
        <dbReference type="ChEBI" id="CHEBI:15377"/>
        <dbReference type="ChEBI" id="CHEBI:15378"/>
        <dbReference type="ChEBI" id="CHEBI:16526"/>
        <dbReference type="ChEBI" id="CHEBI:28938"/>
        <dbReference type="ChEBI" id="CHEBI:59891"/>
        <dbReference type="ChEBI" id="CHEBI:59894"/>
        <dbReference type="EC" id="3.5.1.110"/>
    </reaction>
</comment>
<comment type="catalytic activity">
    <reaction evidence="1">
        <text>(Z)-3-ureidoacrylate + H2O = (Z)-3-aminoacrylate + carbamate + H(+)</text>
        <dbReference type="Rhea" id="RHEA:31603"/>
        <dbReference type="ChEBI" id="CHEBI:13941"/>
        <dbReference type="ChEBI" id="CHEBI:15377"/>
        <dbReference type="ChEBI" id="CHEBI:15378"/>
        <dbReference type="ChEBI" id="CHEBI:59891"/>
        <dbReference type="ChEBI" id="CHEBI:59894"/>
    </reaction>
</comment>
<comment type="catalytic activity">
    <reaction evidence="1">
        <text>(Z)-2-methylureidoacrylate + H2O + H(+) = (Z)-2-methylaminoacrylate + NH4(+) + CO2</text>
        <dbReference type="Rhea" id="RHEA:42620"/>
        <dbReference type="ChEBI" id="CHEBI:15377"/>
        <dbReference type="ChEBI" id="CHEBI:15378"/>
        <dbReference type="ChEBI" id="CHEBI:16526"/>
        <dbReference type="ChEBI" id="CHEBI:28938"/>
        <dbReference type="ChEBI" id="CHEBI:143783"/>
        <dbReference type="ChEBI" id="CHEBI:145735"/>
        <dbReference type="EC" id="3.5.1.110"/>
    </reaction>
</comment>
<comment type="similarity">
    <text evidence="1">Belongs to the isochorismatase family. RutB subfamily.</text>
</comment>
<keyword id="KW-0378">Hydrolase</keyword>
<proteinExistence type="inferred from homology"/>
<name>RUTB_YERE8</name>
<sequence>MILNARPEPIAFPTSASALIVVDMQNAYASEGGYLDLAGFDVSATAPIITNIKRAITAARAAGIQVIFFQNGWDPQYVEAGGEGSPNWHKSNALKTMRKQPELMGKLLAKGDWDYALVDELQPQAGDIVIAKPRYSGFFNTQLDSILRAKGIHHLIFTGIATNVCVESTLRDGFFFEYFGVVLEDATHQAGPDFAQKAALYNIETFFGWVSDVETFCNCIAPSAQLSQSA</sequence>
<dbReference type="EC" id="3.5.1.110" evidence="1"/>
<dbReference type="EMBL" id="AM286415">
    <property type="protein sequence ID" value="CAL12028.1"/>
    <property type="molecule type" value="Genomic_DNA"/>
</dbReference>
<dbReference type="RefSeq" id="YP_001006204.1">
    <property type="nucleotide sequence ID" value="NC_008800.1"/>
</dbReference>
<dbReference type="SMR" id="A1JMX8"/>
<dbReference type="KEGG" id="yen:YE1949"/>
<dbReference type="PATRIC" id="fig|393305.7.peg.2106"/>
<dbReference type="eggNOG" id="COG1335">
    <property type="taxonomic scope" value="Bacteria"/>
</dbReference>
<dbReference type="HOGENOM" id="CLU_068979_8_0_6"/>
<dbReference type="OrthoDB" id="9807387at2"/>
<dbReference type="Proteomes" id="UP000000642">
    <property type="component" value="Chromosome"/>
</dbReference>
<dbReference type="GO" id="GO:0016811">
    <property type="term" value="F:hydrolase activity, acting on carbon-nitrogen (but not peptide) bonds, in linear amides"/>
    <property type="evidence" value="ECO:0007669"/>
    <property type="project" value="UniProtKB-UniRule"/>
</dbReference>
<dbReference type="GO" id="GO:0019740">
    <property type="term" value="P:nitrogen utilization"/>
    <property type="evidence" value="ECO:0007669"/>
    <property type="project" value="UniProtKB-UniRule"/>
</dbReference>
<dbReference type="GO" id="GO:0006212">
    <property type="term" value="P:uracil catabolic process"/>
    <property type="evidence" value="ECO:0007669"/>
    <property type="project" value="UniProtKB-UniRule"/>
</dbReference>
<dbReference type="CDD" id="cd00431">
    <property type="entry name" value="cysteine_hydrolases"/>
    <property type="match status" value="1"/>
</dbReference>
<dbReference type="Gene3D" id="3.40.50.850">
    <property type="entry name" value="Isochorismatase-like"/>
    <property type="match status" value="1"/>
</dbReference>
<dbReference type="HAMAP" id="MF_00830">
    <property type="entry name" value="RutB"/>
    <property type="match status" value="1"/>
</dbReference>
<dbReference type="InterPro" id="IPR000868">
    <property type="entry name" value="Isochorismatase-like_dom"/>
</dbReference>
<dbReference type="InterPro" id="IPR050272">
    <property type="entry name" value="Isochorismatase-like_hydrls"/>
</dbReference>
<dbReference type="InterPro" id="IPR036380">
    <property type="entry name" value="Isochorismatase-like_sf"/>
</dbReference>
<dbReference type="InterPro" id="IPR019916">
    <property type="entry name" value="RutB"/>
</dbReference>
<dbReference type="NCBIfam" id="TIGR03614">
    <property type="entry name" value="RutB"/>
    <property type="match status" value="1"/>
</dbReference>
<dbReference type="PANTHER" id="PTHR43540:SF6">
    <property type="entry name" value="ISOCHORISMATASE-LIKE DOMAIN-CONTAINING PROTEIN"/>
    <property type="match status" value="1"/>
</dbReference>
<dbReference type="PANTHER" id="PTHR43540">
    <property type="entry name" value="PEROXYUREIDOACRYLATE/UREIDOACRYLATE AMIDOHYDROLASE-RELATED"/>
    <property type="match status" value="1"/>
</dbReference>
<dbReference type="Pfam" id="PF00857">
    <property type="entry name" value="Isochorismatase"/>
    <property type="match status" value="1"/>
</dbReference>
<dbReference type="SUPFAM" id="SSF52499">
    <property type="entry name" value="Isochorismatase-like hydrolases"/>
    <property type="match status" value="1"/>
</dbReference>
<gene>
    <name evidence="1" type="primary">rutB</name>
    <name type="ordered locus">YE1949</name>
</gene>
<accession>A1JMX8</accession>